<sequence length="513" mass="55222">MQLNSTEISELIKQRIAQFNVVSEAHNEGTIVSVSDGVIRIHGLADCMQGEMISLPGNRYAIALNLERDSVGAVVMGPYADLAEGMKVKCTGRILEVPVGRGLLGRVVNTLGAPIDGKGPLDHDGFSAVEAIAPGVIERQSVDQPVQTGYKAVDSMIPIGRGQRELIIGDRQTGKTALAIDAIINQRDSGIKCIYVAIGQKASTISNVVRKLEEHGALANTIVVVATASESAALQYLAPYAGCAMGEYFRDRGEDALIIYDDLSKQAVAYRQISLLLRRPPGREAFPGDVFYLHSRLLERAARVNAEYVEAFTKGEVKGKTGSLTALPIIETQAGDVSAFVPTNVISITDGQIFLETNLFNAGIRPAVNPGISVSRVGGAAQTKIMKKLSGGIRTALAQYRELAAFSQFASDLDDATRKQLDHGQKVTELLKQKQYAPMSVAQQSLVLFAAERGYLADVELSKIGSFEAALLAYVDRDHAPLMQEINQTGGYNDEIEGKLKGILDSFKATQSW</sequence>
<gene>
    <name evidence="1" type="primary">atpA</name>
    <name type="ordered locus">ECSE_4024</name>
</gene>
<evidence type="ECO:0000255" key="1">
    <source>
        <dbReference type="HAMAP-Rule" id="MF_01346"/>
    </source>
</evidence>
<proteinExistence type="inferred from homology"/>
<dbReference type="EC" id="7.1.2.2" evidence="1"/>
<dbReference type="EMBL" id="AP009240">
    <property type="protein sequence ID" value="BAG79548.1"/>
    <property type="molecule type" value="Genomic_DNA"/>
</dbReference>
<dbReference type="RefSeq" id="WP_001176745.1">
    <property type="nucleotide sequence ID" value="NC_011415.1"/>
</dbReference>
<dbReference type="SMR" id="B6I3X1"/>
<dbReference type="GeneID" id="93778233"/>
<dbReference type="KEGG" id="ecy:ECSE_4024"/>
<dbReference type="HOGENOM" id="CLU_010091_2_1_6"/>
<dbReference type="Proteomes" id="UP000008199">
    <property type="component" value="Chromosome"/>
</dbReference>
<dbReference type="GO" id="GO:0005886">
    <property type="term" value="C:plasma membrane"/>
    <property type="evidence" value="ECO:0007669"/>
    <property type="project" value="UniProtKB-SubCell"/>
</dbReference>
<dbReference type="GO" id="GO:0045259">
    <property type="term" value="C:proton-transporting ATP synthase complex"/>
    <property type="evidence" value="ECO:0007669"/>
    <property type="project" value="UniProtKB-KW"/>
</dbReference>
<dbReference type="GO" id="GO:0043531">
    <property type="term" value="F:ADP binding"/>
    <property type="evidence" value="ECO:0007669"/>
    <property type="project" value="TreeGrafter"/>
</dbReference>
<dbReference type="GO" id="GO:0005524">
    <property type="term" value="F:ATP binding"/>
    <property type="evidence" value="ECO:0007669"/>
    <property type="project" value="UniProtKB-UniRule"/>
</dbReference>
<dbReference type="GO" id="GO:0046933">
    <property type="term" value="F:proton-transporting ATP synthase activity, rotational mechanism"/>
    <property type="evidence" value="ECO:0007669"/>
    <property type="project" value="UniProtKB-UniRule"/>
</dbReference>
<dbReference type="CDD" id="cd18113">
    <property type="entry name" value="ATP-synt_F1_alpha_C"/>
    <property type="match status" value="1"/>
</dbReference>
<dbReference type="CDD" id="cd18116">
    <property type="entry name" value="ATP-synt_F1_alpha_N"/>
    <property type="match status" value="1"/>
</dbReference>
<dbReference type="CDD" id="cd01132">
    <property type="entry name" value="F1-ATPase_alpha_CD"/>
    <property type="match status" value="1"/>
</dbReference>
<dbReference type="FunFam" id="1.20.150.20:FF:000001">
    <property type="entry name" value="ATP synthase subunit alpha"/>
    <property type="match status" value="1"/>
</dbReference>
<dbReference type="FunFam" id="2.40.30.20:FF:000001">
    <property type="entry name" value="ATP synthase subunit alpha"/>
    <property type="match status" value="1"/>
</dbReference>
<dbReference type="FunFam" id="3.40.50.300:FF:000002">
    <property type="entry name" value="ATP synthase subunit alpha"/>
    <property type="match status" value="1"/>
</dbReference>
<dbReference type="Gene3D" id="2.40.30.20">
    <property type="match status" value="1"/>
</dbReference>
<dbReference type="Gene3D" id="1.20.150.20">
    <property type="entry name" value="ATP synthase alpha/beta chain, C-terminal domain"/>
    <property type="match status" value="1"/>
</dbReference>
<dbReference type="Gene3D" id="3.40.50.300">
    <property type="entry name" value="P-loop containing nucleotide triphosphate hydrolases"/>
    <property type="match status" value="1"/>
</dbReference>
<dbReference type="HAMAP" id="MF_01346">
    <property type="entry name" value="ATP_synth_alpha_bact"/>
    <property type="match status" value="1"/>
</dbReference>
<dbReference type="InterPro" id="IPR023366">
    <property type="entry name" value="ATP_synth_asu-like_sf"/>
</dbReference>
<dbReference type="InterPro" id="IPR000793">
    <property type="entry name" value="ATP_synth_asu_C"/>
</dbReference>
<dbReference type="InterPro" id="IPR038376">
    <property type="entry name" value="ATP_synth_asu_C_sf"/>
</dbReference>
<dbReference type="InterPro" id="IPR033732">
    <property type="entry name" value="ATP_synth_F1_a_nt-bd_dom"/>
</dbReference>
<dbReference type="InterPro" id="IPR005294">
    <property type="entry name" value="ATP_synth_F1_asu"/>
</dbReference>
<dbReference type="InterPro" id="IPR020003">
    <property type="entry name" value="ATPase_a/bsu_AS"/>
</dbReference>
<dbReference type="InterPro" id="IPR004100">
    <property type="entry name" value="ATPase_F1/V1/A1_a/bsu_N"/>
</dbReference>
<dbReference type="InterPro" id="IPR036121">
    <property type="entry name" value="ATPase_F1/V1/A1_a/bsu_N_sf"/>
</dbReference>
<dbReference type="InterPro" id="IPR000194">
    <property type="entry name" value="ATPase_F1/V1/A1_a/bsu_nucl-bd"/>
</dbReference>
<dbReference type="InterPro" id="IPR027417">
    <property type="entry name" value="P-loop_NTPase"/>
</dbReference>
<dbReference type="NCBIfam" id="TIGR00962">
    <property type="entry name" value="atpA"/>
    <property type="match status" value="1"/>
</dbReference>
<dbReference type="NCBIfam" id="NF009884">
    <property type="entry name" value="PRK13343.1"/>
    <property type="match status" value="1"/>
</dbReference>
<dbReference type="PANTHER" id="PTHR48082">
    <property type="entry name" value="ATP SYNTHASE SUBUNIT ALPHA, MITOCHONDRIAL"/>
    <property type="match status" value="1"/>
</dbReference>
<dbReference type="PANTHER" id="PTHR48082:SF2">
    <property type="entry name" value="ATP SYNTHASE SUBUNIT ALPHA, MITOCHONDRIAL"/>
    <property type="match status" value="1"/>
</dbReference>
<dbReference type="Pfam" id="PF00006">
    <property type="entry name" value="ATP-synt_ab"/>
    <property type="match status" value="1"/>
</dbReference>
<dbReference type="Pfam" id="PF00306">
    <property type="entry name" value="ATP-synt_ab_C"/>
    <property type="match status" value="1"/>
</dbReference>
<dbReference type="Pfam" id="PF02874">
    <property type="entry name" value="ATP-synt_ab_N"/>
    <property type="match status" value="1"/>
</dbReference>
<dbReference type="SUPFAM" id="SSF47917">
    <property type="entry name" value="C-terminal domain of alpha and beta subunits of F1 ATP synthase"/>
    <property type="match status" value="1"/>
</dbReference>
<dbReference type="SUPFAM" id="SSF50615">
    <property type="entry name" value="N-terminal domain of alpha and beta subunits of F1 ATP synthase"/>
    <property type="match status" value="1"/>
</dbReference>
<dbReference type="SUPFAM" id="SSF52540">
    <property type="entry name" value="P-loop containing nucleoside triphosphate hydrolases"/>
    <property type="match status" value="1"/>
</dbReference>
<dbReference type="PROSITE" id="PS00152">
    <property type="entry name" value="ATPASE_ALPHA_BETA"/>
    <property type="match status" value="1"/>
</dbReference>
<accession>B6I3X1</accession>
<name>ATPA_ECOSE</name>
<protein>
    <recommendedName>
        <fullName evidence="1">ATP synthase subunit alpha</fullName>
        <ecNumber evidence="1">7.1.2.2</ecNumber>
    </recommendedName>
    <alternativeName>
        <fullName evidence="1">ATP synthase F1 sector subunit alpha</fullName>
    </alternativeName>
    <alternativeName>
        <fullName evidence="1">F-ATPase subunit alpha</fullName>
    </alternativeName>
</protein>
<keyword id="KW-0066">ATP synthesis</keyword>
<keyword id="KW-0067">ATP-binding</keyword>
<keyword id="KW-0997">Cell inner membrane</keyword>
<keyword id="KW-1003">Cell membrane</keyword>
<keyword id="KW-0139">CF(1)</keyword>
<keyword id="KW-0375">Hydrogen ion transport</keyword>
<keyword id="KW-0406">Ion transport</keyword>
<keyword id="KW-0472">Membrane</keyword>
<keyword id="KW-0547">Nucleotide-binding</keyword>
<keyword id="KW-1278">Translocase</keyword>
<keyword id="KW-0813">Transport</keyword>
<feature type="chain" id="PRO_1000143378" description="ATP synthase subunit alpha">
    <location>
        <begin position="1"/>
        <end position="513"/>
    </location>
</feature>
<feature type="binding site" evidence="1">
    <location>
        <begin position="169"/>
        <end position="176"/>
    </location>
    <ligand>
        <name>ATP</name>
        <dbReference type="ChEBI" id="CHEBI:30616"/>
    </ligand>
</feature>
<feature type="site" description="Required for activity" evidence="1">
    <location>
        <position position="373"/>
    </location>
</feature>
<comment type="function">
    <text evidence="1">Produces ATP from ADP in the presence of a proton gradient across the membrane. The alpha chain is a regulatory subunit.</text>
</comment>
<comment type="catalytic activity">
    <reaction evidence="1">
        <text>ATP + H2O + 4 H(+)(in) = ADP + phosphate + 5 H(+)(out)</text>
        <dbReference type="Rhea" id="RHEA:57720"/>
        <dbReference type="ChEBI" id="CHEBI:15377"/>
        <dbReference type="ChEBI" id="CHEBI:15378"/>
        <dbReference type="ChEBI" id="CHEBI:30616"/>
        <dbReference type="ChEBI" id="CHEBI:43474"/>
        <dbReference type="ChEBI" id="CHEBI:456216"/>
        <dbReference type="EC" id="7.1.2.2"/>
    </reaction>
</comment>
<comment type="subunit">
    <text evidence="1">F-type ATPases have 2 components, CF(1) - the catalytic core - and CF(0) - the membrane proton channel. CF(1) has five subunits: alpha(3), beta(3), gamma(1), delta(1), epsilon(1). CF(0) has three main subunits: a(1), b(2) and c(9-12). The alpha and beta chains form an alternating ring which encloses part of the gamma chain. CF(1) is attached to CF(0) by a central stalk formed by the gamma and epsilon chains, while a peripheral stalk is formed by the delta and b chains.</text>
</comment>
<comment type="subcellular location">
    <subcellularLocation>
        <location evidence="1">Cell inner membrane</location>
        <topology evidence="1">Peripheral membrane protein</topology>
    </subcellularLocation>
</comment>
<comment type="similarity">
    <text evidence="1">Belongs to the ATPase alpha/beta chains family.</text>
</comment>
<reference key="1">
    <citation type="journal article" date="2008" name="DNA Res.">
        <title>Complete genome sequence and comparative analysis of the wild-type commensal Escherichia coli strain SE11 isolated from a healthy adult.</title>
        <authorList>
            <person name="Oshima K."/>
            <person name="Toh H."/>
            <person name="Ogura Y."/>
            <person name="Sasamoto H."/>
            <person name="Morita H."/>
            <person name="Park S.-H."/>
            <person name="Ooka T."/>
            <person name="Iyoda S."/>
            <person name="Taylor T.D."/>
            <person name="Hayashi T."/>
            <person name="Itoh K."/>
            <person name="Hattori M."/>
        </authorList>
    </citation>
    <scope>NUCLEOTIDE SEQUENCE [LARGE SCALE GENOMIC DNA]</scope>
    <source>
        <strain>SE11</strain>
    </source>
</reference>
<organism>
    <name type="scientific">Escherichia coli (strain SE11)</name>
    <dbReference type="NCBI Taxonomy" id="409438"/>
    <lineage>
        <taxon>Bacteria</taxon>
        <taxon>Pseudomonadati</taxon>
        <taxon>Pseudomonadota</taxon>
        <taxon>Gammaproteobacteria</taxon>
        <taxon>Enterobacterales</taxon>
        <taxon>Enterobacteriaceae</taxon>
        <taxon>Escherichia</taxon>
    </lineage>
</organism>